<sequence length="103" mass="11410">MTYKIGVVGDKDSVSPFRLFGFDVQHGTTKTEIRKTIDEMAKNEYGVIYITEQCANLVPETIERYKGQLTPAIILIPSHQGTLGIGLEEIQNSVEKAVGQNIL</sequence>
<feature type="chain" id="PRO_0000144830" description="V-type sodium ATPase subunit G">
    <location>
        <begin position="1"/>
        <end position="103"/>
    </location>
</feature>
<feature type="strand" evidence="2">
    <location>
        <begin position="2"/>
        <end position="9"/>
    </location>
</feature>
<feature type="helix" evidence="2">
    <location>
        <begin position="11"/>
        <end position="14"/>
    </location>
</feature>
<feature type="helix" evidence="2">
    <location>
        <begin position="15"/>
        <end position="20"/>
    </location>
</feature>
<feature type="strand" evidence="2">
    <location>
        <begin position="23"/>
        <end position="25"/>
    </location>
</feature>
<feature type="helix" evidence="2">
    <location>
        <begin position="30"/>
        <end position="42"/>
    </location>
</feature>
<feature type="strand" evidence="2">
    <location>
        <begin position="45"/>
        <end position="51"/>
    </location>
</feature>
<feature type="helix" evidence="2">
    <location>
        <begin position="52"/>
        <end position="55"/>
    </location>
</feature>
<feature type="helix" evidence="2">
    <location>
        <begin position="59"/>
        <end position="66"/>
    </location>
</feature>
<feature type="strand" evidence="2">
    <location>
        <begin position="68"/>
        <end position="70"/>
    </location>
</feature>
<feature type="strand" evidence="2">
    <location>
        <begin position="72"/>
        <end position="76"/>
    </location>
</feature>
<feature type="helix" evidence="2">
    <location>
        <begin position="85"/>
        <end position="97"/>
    </location>
</feature>
<accession>P43455</accession>
<accession>I6SD39</accession>
<name>NTPG_ENTHA</name>
<gene>
    <name type="primary">ntpG</name>
    <name type="synonym">ntpQ</name>
    <name type="ordered locus">EHR_08255</name>
</gene>
<proteinExistence type="evidence at protein level"/>
<keyword id="KW-0002">3D-structure</keyword>
<keyword id="KW-0406">Ion transport</keyword>
<keyword id="KW-0915">Sodium</keyword>
<keyword id="KW-0739">Sodium transport</keyword>
<keyword id="KW-0813">Transport</keyword>
<comment type="function">
    <text>Involved in ATP-driven sodium extrusion.</text>
</comment>
<comment type="similarity">
    <text evidence="1">Belongs to the V-ATPase F subunit family.</text>
</comment>
<evidence type="ECO:0000305" key="1"/>
<evidence type="ECO:0007829" key="2">
    <source>
        <dbReference type="PDB" id="3AON"/>
    </source>
</evidence>
<organism>
    <name type="scientific">Enterococcus hirae (strain ATCC 9790 / DSM 20160 / JCM 8729 / LMG 6399 / NBRC 3181 / NCIMB 6459 / NCDO 1258 / NCTC 12367 / WDCM 00089 / R)</name>
    <dbReference type="NCBI Taxonomy" id="768486"/>
    <lineage>
        <taxon>Bacteria</taxon>
        <taxon>Bacillati</taxon>
        <taxon>Bacillota</taxon>
        <taxon>Bacilli</taxon>
        <taxon>Lactobacillales</taxon>
        <taxon>Enterococcaceae</taxon>
        <taxon>Enterococcus</taxon>
    </lineage>
</organism>
<dbReference type="EMBL" id="D17462">
    <property type="protein sequence ID" value="BAA04274.1"/>
    <property type="molecule type" value="Genomic_DNA"/>
</dbReference>
<dbReference type="EMBL" id="X76913">
    <property type="protein sequence ID" value="CAA54240.1"/>
    <property type="molecule type" value="Genomic_DNA"/>
</dbReference>
<dbReference type="EMBL" id="CP003504">
    <property type="protein sequence ID" value="AFM70578.1"/>
    <property type="molecule type" value="Genomic_DNA"/>
</dbReference>
<dbReference type="PIR" id="F54392">
    <property type="entry name" value="F54392"/>
</dbReference>
<dbReference type="RefSeq" id="WP_010718638.1">
    <property type="nucleotide sequence ID" value="NZ_KB946231.1"/>
</dbReference>
<dbReference type="PDB" id="3AON">
    <property type="method" value="X-ray"/>
    <property type="resolution" value="2.00 A"/>
    <property type="chains" value="B=1-103"/>
</dbReference>
<dbReference type="PDB" id="3VR4">
    <property type="method" value="X-ray"/>
    <property type="resolution" value="2.17 A"/>
    <property type="chains" value="H=1-103"/>
</dbReference>
<dbReference type="PDB" id="3VR5">
    <property type="method" value="X-ray"/>
    <property type="resolution" value="3.90 A"/>
    <property type="chains" value="H=1-103"/>
</dbReference>
<dbReference type="PDB" id="3VR6">
    <property type="method" value="X-ray"/>
    <property type="resolution" value="2.68 A"/>
    <property type="chains" value="H=1-103"/>
</dbReference>
<dbReference type="PDB" id="5KNB">
    <property type="method" value="X-ray"/>
    <property type="resolution" value="3.25 A"/>
    <property type="chains" value="H=1-103"/>
</dbReference>
<dbReference type="PDB" id="5KNC">
    <property type="method" value="X-ray"/>
    <property type="resolution" value="3.02 A"/>
    <property type="chains" value="H=1-103"/>
</dbReference>
<dbReference type="PDB" id="5KND">
    <property type="method" value="X-ray"/>
    <property type="resolution" value="2.89 A"/>
    <property type="chains" value="H=1-103"/>
</dbReference>
<dbReference type="PDBsum" id="3AON"/>
<dbReference type="PDBsum" id="3VR4"/>
<dbReference type="PDBsum" id="3VR5"/>
<dbReference type="PDBsum" id="3VR6"/>
<dbReference type="PDBsum" id="5KNB"/>
<dbReference type="PDBsum" id="5KNC"/>
<dbReference type="PDBsum" id="5KND"/>
<dbReference type="SMR" id="P43455"/>
<dbReference type="DIP" id="DIP-59797N"/>
<dbReference type="IntAct" id="P43455">
    <property type="interactions" value="2"/>
</dbReference>
<dbReference type="TCDB" id="3.A.2.2.2">
    <property type="family name" value="the h+- or na+-translocating f-type, v-type and a-type atpase (f-atpase) superfamily"/>
</dbReference>
<dbReference type="KEGG" id="ehr:EHR_08255"/>
<dbReference type="eggNOG" id="COG1436">
    <property type="taxonomic scope" value="Bacteria"/>
</dbReference>
<dbReference type="HOGENOM" id="CLU_135754_1_0_9"/>
<dbReference type="OrthoDB" id="5311at2"/>
<dbReference type="BioCyc" id="MetaCyc:MONOMER-14152"/>
<dbReference type="EvolutionaryTrace" id="P43455"/>
<dbReference type="Proteomes" id="UP000002895">
    <property type="component" value="Chromosome"/>
</dbReference>
<dbReference type="GO" id="GO:0005524">
    <property type="term" value="F:ATP binding"/>
    <property type="evidence" value="ECO:0007669"/>
    <property type="project" value="UniProtKB-UniRule"/>
</dbReference>
<dbReference type="GO" id="GO:0046933">
    <property type="term" value="F:proton-transporting ATP synthase activity, rotational mechanism"/>
    <property type="evidence" value="ECO:0007669"/>
    <property type="project" value="UniProtKB-UniRule"/>
</dbReference>
<dbReference type="GO" id="GO:0046961">
    <property type="term" value="F:proton-transporting ATPase activity, rotational mechanism"/>
    <property type="evidence" value="ECO:0007669"/>
    <property type="project" value="InterPro"/>
</dbReference>
<dbReference type="GO" id="GO:0042777">
    <property type="term" value="P:proton motive force-driven plasma membrane ATP synthesis"/>
    <property type="evidence" value="ECO:0007669"/>
    <property type="project" value="UniProtKB-UniRule"/>
</dbReference>
<dbReference type="GO" id="GO:0006814">
    <property type="term" value="P:sodium ion transport"/>
    <property type="evidence" value="ECO:0007669"/>
    <property type="project" value="UniProtKB-KW"/>
</dbReference>
<dbReference type="Gene3D" id="3.40.50.10580">
    <property type="entry name" value="ATPase, V1 complex, subunit F"/>
    <property type="match status" value="1"/>
</dbReference>
<dbReference type="HAMAP" id="MF_00312">
    <property type="entry name" value="ATP_synth_F_arch"/>
    <property type="match status" value="1"/>
</dbReference>
<dbReference type="InterPro" id="IPR008218">
    <property type="entry name" value="ATPase_V1-cplx_f_g_su"/>
</dbReference>
<dbReference type="InterPro" id="IPR022944">
    <property type="entry name" value="ATPase_V1-cplx_fsu_bac/arc"/>
</dbReference>
<dbReference type="InterPro" id="IPR036906">
    <property type="entry name" value="ATPase_V1_fsu_sf"/>
</dbReference>
<dbReference type="NCBIfam" id="NF002384">
    <property type="entry name" value="PRK01395.1"/>
    <property type="match status" value="1"/>
</dbReference>
<dbReference type="Pfam" id="PF01990">
    <property type="entry name" value="ATP-synt_F"/>
    <property type="match status" value="1"/>
</dbReference>
<dbReference type="SUPFAM" id="SSF159468">
    <property type="entry name" value="AtpF-like"/>
    <property type="match status" value="1"/>
</dbReference>
<protein>
    <recommendedName>
        <fullName>V-type sodium ATPase subunit G</fullName>
    </recommendedName>
    <alternativeName>
        <fullName>Na(+)-translocating ATPase subunit G</fullName>
    </alternativeName>
    <alternativeName>
        <fullName>V-type sodium pump subunit G</fullName>
    </alternativeName>
</protein>
<reference key="1">
    <citation type="journal article" date="1994" name="J. Biol. Chem.">
        <title>Sequencing and characterization of the ntp gene cluster for vacuolar-type Na(+)-translocating ATPase of Enterococcus hirae.</title>
        <authorList>
            <person name="Takase K."/>
            <person name="Kakinuma S."/>
            <person name="Yamato I."/>
            <person name="Konishi K."/>
            <person name="Igarashi K."/>
            <person name="Kakinuma Y."/>
        </authorList>
    </citation>
    <scope>NUCLEOTIDE SEQUENCE [GENOMIC DNA]</scope>
    <source>
        <strain>ATCC 9790 / DSM 20160 / JCM 8729 / LMG 6399 / NBRC 3181 / NCIMB 6459 / NCDO 1258 / NCTC 12367 / WDCM 00089 / R</strain>
    </source>
</reference>
<reference key="2">
    <citation type="journal article" date="1994" name="J. Biol. Chem.">
        <title>Operon of vacuolar-type Na(+)-ATPase of Enterococcus hirae.</title>
        <authorList>
            <person name="Solioz M."/>
            <person name="Davies K."/>
        </authorList>
    </citation>
    <scope>NUCLEOTIDE SEQUENCE [GENOMIC DNA]</scope>
    <source>
        <strain>ATCC 9790 / DSM 20160 / JCM 8729 / LMG 6399 / NBRC 3181 / NCIMB 6459 / NCDO 1258 / NCTC 12367 / WDCM 00089 / R</strain>
    </source>
</reference>
<reference key="3">
    <citation type="journal article" date="2012" name="J. Bacteriol.">
        <title>Genome sequence of Enterococcus hirae (Streptococcus faecalis) ATCC 9790, a model organism for the study of ion transport, bioenergetics, and copper homeostasis.</title>
        <authorList>
            <person name="Gaechter T."/>
            <person name="Wunderlin C."/>
            <person name="Schmidheini T."/>
            <person name="Solioz M."/>
        </authorList>
    </citation>
    <scope>NUCLEOTIDE SEQUENCE [LARGE SCALE GENOMIC DNA]</scope>
    <source>
        <strain>ATCC 9790 / DSM 20160 / JCM 8729 / LMG 6399 / NBRC 3181 / NCIMB 6459 / NCDO 1258 / NCTC 12367 / WDCM 00089 / R</strain>
    </source>
</reference>